<reference key="1">
    <citation type="submission" date="2008-05" db="EMBL/GenBank/DDBJ databases">
        <title>Complete sequence of Rhodopseudomonas palustris TIE-1.</title>
        <authorList>
            <consortium name="US DOE Joint Genome Institute"/>
            <person name="Lucas S."/>
            <person name="Copeland A."/>
            <person name="Lapidus A."/>
            <person name="Glavina del Rio T."/>
            <person name="Dalin E."/>
            <person name="Tice H."/>
            <person name="Pitluck S."/>
            <person name="Chain P."/>
            <person name="Malfatti S."/>
            <person name="Shin M."/>
            <person name="Vergez L."/>
            <person name="Lang D."/>
            <person name="Schmutz J."/>
            <person name="Larimer F."/>
            <person name="Land M."/>
            <person name="Hauser L."/>
            <person name="Kyrpides N."/>
            <person name="Mikhailova N."/>
            <person name="Emerson D."/>
            <person name="Newman D.K."/>
            <person name="Roden E."/>
            <person name="Richardson P."/>
        </authorList>
    </citation>
    <scope>NUCLEOTIDE SEQUENCE [LARGE SCALE GENOMIC DNA]</scope>
    <source>
        <strain>TIE-1</strain>
    </source>
</reference>
<organism>
    <name type="scientific">Rhodopseudomonas palustris (strain TIE-1)</name>
    <dbReference type="NCBI Taxonomy" id="395960"/>
    <lineage>
        <taxon>Bacteria</taxon>
        <taxon>Pseudomonadati</taxon>
        <taxon>Pseudomonadota</taxon>
        <taxon>Alphaproteobacteria</taxon>
        <taxon>Hyphomicrobiales</taxon>
        <taxon>Nitrobacteraceae</taxon>
        <taxon>Rhodopseudomonas</taxon>
    </lineage>
</organism>
<evidence type="ECO:0000255" key="1">
    <source>
        <dbReference type="HAMAP-Rule" id="MF_01200"/>
    </source>
</evidence>
<feature type="chain" id="PRO_1000138552" description="Orotidine 5'-phosphate decarboxylase">
    <location>
        <begin position="1"/>
        <end position="237"/>
    </location>
</feature>
<feature type="active site" description="Proton donor" evidence="1">
    <location>
        <position position="68"/>
    </location>
</feature>
<feature type="binding site" evidence="1">
    <location>
        <position position="17"/>
    </location>
    <ligand>
        <name>substrate</name>
    </ligand>
</feature>
<feature type="binding site" evidence="1">
    <location>
        <position position="39"/>
    </location>
    <ligand>
        <name>substrate</name>
    </ligand>
</feature>
<feature type="binding site" evidence="1">
    <location>
        <begin position="66"/>
        <end position="75"/>
    </location>
    <ligand>
        <name>substrate</name>
    </ligand>
</feature>
<feature type="binding site" evidence="1">
    <location>
        <position position="121"/>
    </location>
    <ligand>
        <name>substrate</name>
    </ligand>
</feature>
<feature type="binding site" evidence="1">
    <location>
        <position position="182"/>
    </location>
    <ligand>
        <name>substrate</name>
    </ligand>
</feature>
<feature type="binding site" evidence="1">
    <location>
        <position position="191"/>
    </location>
    <ligand>
        <name>substrate</name>
    </ligand>
</feature>
<feature type="binding site" evidence="1">
    <location>
        <position position="211"/>
    </location>
    <ligand>
        <name>substrate</name>
    </ligand>
</feature>
<feature type="binding site" evidence="1">
    <location>
        <position position="212"/>
    </location>
    <ligand>
        <name>substrate</name>
    </ligand>
</feature>
<proteinExistence type="inferred from homology"/>
<sequence length="237" mass="24660">MAPVDIPDRDRLIVALDLPDLRVAEAMVDRLGDSVGFYKIGYQLAYAGGLPLARALVGAGKKVFVDLKLHDIGNTVARGVESLSHLGASFLTVHAYPQTMKAAVEARGSSKVKILAVTVLTSYDDRDLADAGYRFGVRDLVEARARQAQAIGVDGLVCSPEEAAHLRGIVGPEMDLVTPGIRPAGAAAGDQKRIMTPAKAIAAGASYLVVGRPVLDAPDPKAAADAIVAEIAAARGS</sequence>
<keyword id="KW-0210">Decarboxylase</keyword>
<keyword id="KW-0456">Lyase</keyword>
<keyword id="KW-0665">Pyrimidine biosynthesis</keyword>
<protein>
    <recommendedName>
        <fullName evidence="1">Orotidine 5'-phosphate decarboxylase</fullName>
        <ecNumber evidence="1">4.1.1.23</ecNumber>
    </recommendedName>
    <alternativeName>
        <fullName evidence="1">OMP decarboxylase</fullName>
        <shortName evidence="1">OMPDCase</shortName>
        <shortName evidence="1">OMPdecase</shortName>
    </alternativeName>
</protein>
<accession>B3Q976</accession>
<dbReference type="EC" id="4.1.1.23" evidence="1"/>
<dbReference type="EMBL" id="CP001096">
    <property type="protein sequence ID" value="ACE98900.1"/>
    <property type="molecule type" value="Genomic_DNA"/>
</dbReference>
<dbReference type="RefSeq" id="WP_012494075.1">
    <property type="nucleotide sequence ID" value="NC_011004.1"/>
</dbReference>
<dbReference type="SMR" id="B3Q976"/>
<dbReference type="KEGG" id="rpt:Rpal_0340"/>
<dbReference type="HOGENOM" id="CLU_067069_1_0_5"/>
<dbReference type="OrthoDB" id="9806203at2"/>
<dbReference type="UniPathway" id="UPA00070">
    <property type="reaction ID" value="UER00120"/>
</dbReference>
<dbReference type="Proteomes" id="UP000001725">
    <property type="component" value="Chromosome"/>
</dbReference>
<dbReference type="GO" id="GO:0005829">
    <property type="term" value="C:cytosol"/>
    <property type="evidence" value="ECO:0007669"/>
    <property type="project" value="TreeGrafter"/>
</dbReference>
<dbReference type="GO" id="GO:0004590">
    <property type="term" value="F:orotidine-5'-phosphate decarboxylase activity"/>
    <property type="evidence" value="ECO:0007669"/>
    <property type="project" value="UniProtKB-UniRule"/>
</dbReference>
<dbReference type="GO" id="GO:0006207">
    <property type="term" value="P:'de novo' pyrimidine nucleobase biosynthetic process"/>
    <property type="evidence" value="ECO:0007669"/>
    <property type="project" value="InterPro"/>
</dbReference>
<dbReference type="GO" id="GO:0044205">
    <property type="term" value="P:'de novo' UMP biosynthetic process"/>
    <property type="evidence" value="ECO:0007669"/>
    <property type="project" value="UniProtKB-UniRule"/>
</dbReference>
<dbReference type="CDD" id="cd04725">
    <property type="entry name" value="OMP_decarboxylase_like"/>
    <property type="match status" value="1"/>
</dbReference>
<dbReference type="Gene3D" id="3.20.20.70">
    <property type="entry name" value="Aldolase class I"/>
    <property type="match status" value="1"/>
</dbReference>
<dbReference type="HAMAP" id="MF_01200_B">
    <property type="entry name" value="OMPdecase_type1_B"/>
    <property type="match status" value="1"/>
</dbReference>
<dbReference type="InterPro" id="IPR013785">
    <property type="entry name" value="Aldolase_TIM"/>
</dbReference>
<dbReference type="InterPro" id="IPR014732">
    <property type="entry name" value="OMPdecase"/>
</dbReference>
<dbReference type="InterPro" id="IPR018089">
    <property type="entry name" value="OMPdecase_AS"/>
</dbReference>
<dbReference type="InterPro" id="IPR047596">
    <property type="entry name" value="OMPdecase_bac"/>
</dbReference>
<dbReference type="InterPro" id="IPR001754">
    <property type="entry name" value="OMPdeCOase_dom"/>
</dbReference>
<dbReference type="InterPro" id="IPR011060">
    <property type="entry name" value="RibuloseP-bd_barrel"/>
</dbReference>
<dbReference type="NCBIfam" id="NF001273">
    <property type="entry name" value="PRK00230.1"/>
    <property type="match status" value="1"/>
</dbReference>
<dbReference type="NCBIfam" id="TIGR01740">
    <property type="entry name" value="pyrF"/>
    <property type="match status" value="1"/>
</dbReference>
<dbReference type="PANTHER" id="PTHR32119">
    <property type="entry name" value="OROTIDINE 5'-PHOSPHATE DECARBOXYLASE"/>
    <property type="match status" value="1"/>
</dbReference>
<dbReference type="PANTHER" id="PTHR32119:SF2">
    <property type="entry name" value="OROTIDINE 5'-PHOSPHATE DECARBOXYLASE"/>
    <property type="match status" value="1"/>
</dbReference>
<dbReference type="Pfam" id="PF00215">
    <property type="entry name" value="OMPdecase"/>
    <property type="match status" value="1"/>
</dbReference>
<dbReference type="SMART" id="SM00934">
    <property type="entry name" value="OMPdecase"/>
    <property type="match status" value="1"/>
</dbReference>
<dbReference type="SUPFAM" id="SSF51366">
    <property type="entry name" value="Ribulose-phoshate binding barrel"/>
    <property type="match status" value="1"/>
</dbReference>
<dbReference type="PROSITE" id="PS00156">
    <property type="entry name" value="OMPDECASE"/>
    <property type="match status" value="1"/>
</dbReference>
<comment type="function">
    <text evidence="1">Catalyzes the decarboxylation of orotidine 5'-monophosphate (OMP) to uridine 5'-monophosphate (UMP).</text>
</comment>
<comment type="catalytic activity">
    <reaction evidence="1">
        <text>orotidine 5'-phosphate + H(+) = UMP + CO2</text>
        <dbReference type="Rhea" id="RHEA:11596"/>
        <dbReference type="ChEBI" id="CHEBI:15378"/>
        <dbReference type="ChEBI" id="CHEBI:16526"/>
        <dbReference type="ChEBI" id="CHEBI:57538"/>
        <dbReference type="ChEBI" id="CHEBI:57865"/>
        <dbReference type="EC" id="4.1.1.23"/>
    </reaction>
</comment>
<comment type="pathway">
    <text evidence="1">Pyrimidine metabolism; UMP biosynthesis via de novo pathway; UMP from orotate: step 2/2.</text>
</comment>
<comment type="subunit">
    <text evidence="1">Homodimer.</text>
</comment>
<comment type="similarity">
    <text evidence="1">Belongs to the OMP decarboxylase family. Type 1 subfamily.</text>
</comment>
<gene>
    <name evidence="1" type="primary">pyrF</name>
    <name type="ordered locus">Rpal_0340</name>
</gene>
<name>PYRF_RHOPT</name>